<evidence type="ECO:0000255" key="1">
    <source>
        <dbReference type="HAMAP-Rule" id="MF_00090"/>
    </source>
</evidence>
<organism>
    <name type="scientific">Vibrio vulnificus (strain CMCP6)</name>
    <dbReference type="NCBI Taxonomy" id="216895"/>
    <lineage>
        <taxon>Bacteria</taxon>
        <taxon>Pseudomonadati</taxon>
        <taxon>Pseudomonadota</taxon>
        <taxon>Gammaproteobacteria</taxon>
        <taxon>Vibrionales</taxon>
        <taxon>Vibrionaceae</taxon>
        <taxon>Vibrio</taxon>
    </lineage>
</organism>
<name>PIMT_VIBVU</name>
<proteinExistence type="inferred from homology"/>
<comment type="function">
    <text evidence="1">Catalyzes the methyl esterification of L-isoaspartyl residues in peptides and proteins that result from spontaneous decomposition of normal L-aspartyl and L-asparaginyl residues. It plays a role in the repair and/or degradation of damaged proteins.</text>
</comment>
<comment type="catalytic activity">
    <reaction evidence="1">
        <text>[protein]-L-isoaspartate + S-adenosyl-L-methionine = [protein]-L-isoaspartate alpha-methyl ester + S-adenosyl-L-homocysteine</text>
        <dbReference type="Rhea" id="RHEA:12705"/>
        <dbReference type="Rhea" id="RHEA-COMP:12143"/>
        <dbReference type="Rhea" id="RHEA-COMP:12144"/>
        <dbReference type="ChEBI" id="CHEBI:57856"/>
        <dbReference type="ChEBI" id="CHEBI:59789"/>
        <dbReference type="ChEBI" id="CHEBI:90596"/>
        <dbReference type="ChEBI" id="CHEBI:90598"/>
        <dbReference type="EC" id="2.1.1.77"/>
    </reaction>
</comment>
<comment type="subcellular location">
    <subcellularLocation>
        <location evidence="1">Cytoplasm</location>
    </subcellularLocation>
</comment>
<comment type="similarity">
    <text evidence="1">Belongs to the methyltransferase superfamily. L-isoaspartyl/D-aspartyl protein methyltransferase family.</text>
</comment>
<dbReference type="EC" id="2.1.1.77" evidence="1"/>
<dbReference type="EMBL" id="AE016795">
    <property type="protein sequence ID" value="AAO10009.1"/>
    <property type="molecule type" value="Genomic_DNA"/>
</dbReference>
<dbReference type="RefSeq" id="WP_011079519.1">
    <property type="nucleotide sequence ID" value="NC_004459.3"/>
</dbReference>
<dbReference type="SMR" id="Q8DC56"/>
<dbReference type="KEGG" id="vvu:VV1_1586"/>
<dbReference type="HOGENOM" id="CLU_055432_2_0_6"/>
<dbReference type="Proteomes" id="UP000002275">
    <property type="component" value="Chromosome 1"/>
</dbReference>
<dbReference type="GO" id="GO:0005737">
    <property type="term" value="C:cytoplasm"/>
    <property type="evidence" value="ECO:0007669"/>
    <property type="project" value="UniProtKB-SubCell"/>
</dbReference>
<dbReference type="GO" id="GO:0004719">
    <property type="term" value="F:protein-L-isoaspartate (D-aspartate) O-methyltransferase activity"/>
    <property type="evidence" value="ECO:0007669"/>
    <property type="project" value="UniProtKB-UniRule"/>
</dbReference>
<dbReference type="GO" id="GO:0032259">
    <property type="term" value="P:methylation"/>
    <property type="evidence" value="ECO:0007669"/>
    <property type="project" value="UniProtKB-KW"/>
</dbReference>
<dbReference type="GO" id="GO:0036211">
    <property type="term" value="P:protein modification process"/>
    <property type="evidence" value="ECO:0007669"/>
    <property type="project" value="UniProtKB-UniRule"/>
</dbReference>
<dbReference type="GO" id="GO:0030091">
    <property type="term" value="P:protein repair"/>
    <property type="evidence" value="ECO:0007669"/>
    <property type="project" value="UniProtKB-UniRule"/>
</dbReference>
<dbReference type="CDD" id="cd02440">
    <property type="entry name" value="AdoMet_MTases"/>
    <property type="match status" value="1"/>
</dbReference>
<dbReference type="FunFam" id="3.40.50.150:FF:000010">
    <property type="entry name" value="Protein-L-isoaspartate O-methyltransferase"/>
    <property type="match status" value="1"/>
</dbReference>
<dbReference type="Gene3D" id="3.40.50.150">
    <property type="entry name" value="Vaccinia Virus protein VP39"/>
    <property type="match status" value="1"/>
</dbReference>
<dbReference type="HAMAP" id="MF_00090">
    <property type="entry name" value="PIMT"/>
    <property type="match status" value="1"/>
</dbReference>
<dbReference type="InterPro" id="IPR000682">
    <property type="entry name" value="PCMT"/>
</dbReference>
<dbReference type="InterPro" id="IPR029063">
    <property type="entry name" value="SAM-dependent_MTases_sf"/>
</dbReference>
<dbReference type="NCBIfam" id="TIGR00080">
    <property type="entry name" value="pimt"/>
    <property type="match status" value="1"/>
</dbReference>
<dbReference type="NCBIfam" id="NF001453">
    <property type="entry name" value="PRK00312.1"/>
    <property type="match status" value="1"/>
</dbReference>
<dbReference type="PANTHER" id="PTHR11579">
    <property type="entry name" value="PROTEIN-L-ISOASPARTATE O-METHYLTRANSFERASE"/>
    <property type="match status" value="1"/>
</dbReference>
<dbReference type="PANTHER" id="PTHR11579:SF0">
    <property type="entry name" value="PROTEIN-L-ISOASPARTATE(D-ASPARTATE) O-METHYLTRANSFERASE"/>
    <property type="match status" value="1"/>
</dbReference>
<dbReference type="Pfam" id="PF01135">
    <property type="entry name" value="PCMT"/>
    <property type="match status" value="1"/>
</dbReference>
<dbReference type="SUPFAM" id="SSF53335">
    <property type="entry name" value="S-adenosyl-L-methionine-dependent methyltransferases"/>
    <property type="match status" value="1"/>
</dbReference>
<dbReference type="PROSITE" id="PS01279">
    <property type="entry name" value="PCMT"/>
    <property type="match status" value="1"/>
</dbReference>
<accession>Q8DC56</accession>
<gene>
    <name evidence="1" type="primary">pcm</name>
    <name type="ordered locus">VV1_1586</name>
</gene>
<sequence>MSNPQAERLVHFLAVNGIRDSEVLSAIARVPRECFLSQAMMHQAYDNNALPIGQGQTISQPYIVAKMTELLRLKRDSKVLEIGTGSGYQTAVLALLVEHVYSVERIKSLQWDAKRRLKQLDIYNVSTKHGDGWLGWENKGPFDAIIVTAAAESVPPVLLQQLNDGGRMVLPVGTDEQQLILIERQKDQFVSQVIEAVNFVPLIAGDLA</sequence>
<protein>
    <recommendedName>
        <fullName evidence="1">Protein-L-isoaspartate O-methyltransferase</fullName>
        <ecNumber evidence="1">2.1.1.77</ecNumber>
    </recommendedName>
    <alternativeName>
        <fullName evidence="1">L-isoaspartyl protein carboxyl methyltransferase</fullName>
    </alternativeName>
    <alternativeName>
        <fullName evidence="1">Protein L-isoaspartyl methyltransferase</fullName>
    </alternativeName>
    <alternativeName>
        <fullName evidence="1">Protein-beta-aspartate methyltransferase</fullName>
        <shortName evidence="1">PIMT</shortName>
    </alternativeName>
</protein>
<keyword id="KW-0963">Cytoplasm</keyword>
<keyword id="KW-0489">Methyltransferase</keyword>
<keyword id="KW-0949">S-adenosyl-L-methionine</keyword>
<keyword id="KW-0808">Transferase</keyword>
<feature type="chain" id="PRO_0000111908" description="Protein-L-isoaspartate O-methyltransferase">
    <location>
        <begin position="1"/>
        <end position="208"/>
    </location>
</feature>
<feature type="active site" evidence="1">
    <location>
        <position position="59"/>
    </location>
</feature>
<reference key="1">
    <citation type="submission" date="2002-12" db="EMBL/GenBank/DDBJ databases">
        <title>Complete genome sequence of Vibrio vulnificus CMCP6.</title>
        <authorList>
            <person name="Rhee J.H."/>
            <person name="Kim S.Y."/>
            <person name="Chung S.S."/>
            <person name="Kim J.J."/>
            <person name="Moon Y.H."/>
            <person name="Jeong H."/>
            <person name="Choy H.E."/>
        </authorList>
    </citation>
    <scope>NUCLEOTIDE SEQUENCE [LARGE SCALE GENOMIC DNA]</scope>
    <source>
        <strain>CMCP6</strain>
    </source>
</reference>